<gene>
    <name evidence="1" type="primary">murC</name>
    <name type="ordered locus">Swol_0827</name>
</gene>
<protein>
    <recommendedName>
        <fullName evidence="1">UDP-N-acetylmuramate--L-alanine ligase</fullName>
        <ecNumber evidence="1">6.3.2.8</ecNumber>
    </recommendedName>
    <alternativeName>
        <fullName evidence="1">UDP-N-acetylmuramoyl-L-alanine synthetase</fullName>
    </alternativeName>
</protein>
<sequence length="465" mass="51179">MAFTPGKWIHMVGIAGAGMSGIARVLAQQGYKVSGSDLQVNDTTSRLEEIGVEIFKGHSSSNLKEGVDLLVTSSAVPQDNIELRLAREKKIPILKRGQMLAHLANAKKAVAVAGAHGKTTTTSMLYMVLANCGTEPSFIVGGELQGSELNAKLGRGDYFVVEADESDASFLDLRPYIALITNVEDDHLDYYKSVDNIRKAFRQFVEQIRPEGFAMLYGGDAFNRSLVKDLTLNKRLLFYGEDLSNDYYFLNWESIGLGSHFDVYKRELGFLGRFELAVPGKHNALNALAAIASALELGLEMEPIKSALKNFHGARRRFQIQGQKALVTVVDDYAHHPTEIRATIDAARNFHSGRVIVVYQPHRYSRTQLLGRQLGEALINADLAIITEVYSAGEEAIPGISGEVVCQAAQSIGCHSVYIPQREEIIPYLLQICQENDLIITMGAGDIWKLGLQLLEVLPESVLKV</sequence>
<proteinExistence type="inferred from homology"/>
<feature type="chain" id="PRO_0000336873" description="UDP-N-acetylmuramate--L-alanine ligase">
    <location>
        <begin position="1"/>
        <end position="465"/>
    </location>
</feature>
<feature type="binding site" evidence="1">
    <location>
        <begin position="114"/>
        <end position="120"/>
    </location>
    <ligand>
        <name>ATP</name>
        <dbReference type="ChEBI" id="CHEBI:30616"/>
    </ligand>
</feature>
<comment type="function">
    <text evidence="1">Cell wall formation.</text>
</comment>
<comment type="catalytic activity">
    <reaction evidence="1">
        <text>UDP-N-acetyl-alpha-D-muramate + L-alanine + ATP = UDP-N-acetyl-alpha-D-muramoyl-L-alanine + ADP + phosphate + H(+)</text>
        <dbReference type="Rhea" id="RHEA:23372"/>
        <dbReference type="ChEBI" id="CHEBI:15378"/>
        <dbReference type="ChEBI" id="CHEBI:30616"/>
        <dbReference type="ChEBI" id="CHEBI:43474"/>
        <dbReference type="ChEBI" id="CHEBI:57972"/>
        <dbReference type="ChEBI" id="CHEBI:70757"/>
        <dbReference type="ChEBI" id="CHEBI:83898"/>
        <dbReference type="ChEBI" id="CHEBI:456216"/>
        <dbReference type="EC" id="6.3.2.8"/>
    </reaction>
</comment>
<comment type="pathway">
    <text evidence="1">Cell wall biogenesis; peptidoglycan biosynthesis.</text>
</comment>
<comment type="subcellular location">
    <subcellularLocation>
        <location evidence="1">Cytoplasm</location>
    </subcellularLocation>
</comment>
<comment type="similarity">
    <text evidence="1">Belongs to the MurCDEF family.</text>
</comment>
<evidence type="ECO:0000255" key="1">
    <source>
        <dbReference type="HAMAP-Rule" id="MF_00046"/>
    </source>
</evidence>
<keyword id="KW-0067">ATP-binding</keyword>
<keyword id="KW-0131">Cell cycle</keyword>
<keyword id="KW-0132">Cell division</keyword>
<keyword id="KW-0133">Cell shape</keyword>
<keyword id="KW-0961">Cell wall biogenesis/degradation</keyword>
<keyword id="KW-0963">Cytoplasm</keyword>
<keyword id="KW-0436">Ligase</keyword>
<keyword id="KW-0547">Nucleotide-binding</keyword>
<keyword id="KW-0573">Peptidoglycan synthesis</keyword>
<keyword id="KW-1185">Reference proteome</keyword>
<name>MURC_SYNWW</name>
<organism>
    <name type="scientific">Syntrophomonas wolfei subsp. wolfei (strain DSM 2245B / Goettingen)</name>
    <dbReference type="NCBI Taxonomy" id="335541"/>
    <lineage>
        <taxon>Bacteria</taxon>
        <taxon>Bacillati</taxon>
        <taxon>Bacillota</taxon>
        <taxon>Clostridia</taxon>
        <taxon>Eubacteriales</taxon>
        <taxon>Syntrophomonadaceae</taxon>
        <taxon>Syntrophomonas</taxon>
    </lineage>
</organism>
<accession>Q0AYQ7</accession>
<reference key="1">
    <citation type="journal article" date="2010" name="Environ. Microbiol.">
        <title>The genome of Syntrophomonas wolfei: new insights into syntrophic metabolism and biohydrogen production.</title>
        <authorList>
            <person name="Sieber J.R."/>
            <person name="Sims D.R."/>
            <person name="Han C."/>
            <person name="Kim E."/>
            <person name="Lykidis A."/>
            <person name="Lapidus A.L."/>
            <person name="McDonnald E."/>
            <person name="Rohlin L."/>
            <person name="Culley D.E."/>
            <person name="Gunsalus R."/>
            <person name="McInerney M.J."/>
        </authorList>
    </citation>
    <scope>NUCLEOTIDE SEQUENCE [LARGE SCALE GENOMIC DNA]</scope>
    <source>
        <strain>DSM 2245B / Goettingen</strain>
    </source>
</reference>
<dbReference type="EC" id="6.3.2.8" evidence="1"/>
<dbReference type="EMBL" id="CP000448">
    <property type="protein sequence ID" value="ABI68147.1"/>
    <property type="molecule type" value="Genomic_DNA"/>
</dbReference>
<dbReference type="SMR" id="Q0AYQ7"/>
<dbReference type="STRING" id="335541.Swol_0827"/>
<dbReference type="KEGG" id="swo:Swol_0827"/>
<dbReference type="eggNOG" id="COG0773">
    <property type="taxonomic scope" value="Bacteria"/>
</dbReference>
<dbReference type="HOGENOM" id="CLU_028104_2_2_9"/>
<dbReference type="OrthoDB" id="9804126at2"/>
<dbReference type="UniPathway" id="UPA00219"/>
<dbReference type="Proteomes" id="UP000001968">
    <property type="component" value="Chromosome"/>
</dbReference>
<dbReference type="GO" id="GO:0005737">
    <property type="term" value="C:cytoplasm"/>
    <property type="evidence" value="ECO:0007669"/>
    <property type="project" value="UniProtKB-SubCell"/>
</dbReference>
<dbReference type="GO" id="GO:0005524">
    <property type="term" value="F:ATP binding"/>
    <property type="evidence" value="ECO:0007669"/>
    <property type="project" value="UniProtKB-UniRule"/>
</dbReference>
<dbReference type="GO" id="GO:0008763">
    <property type="term" value="F:UDP-N-acetylmuramate-L-alanine ligase activity"/>
    <property type="evidence" value="ECO:0007669"/>
    <property type="project" value="UniProtKB-UniRule"/>
</dbReference>
<dbReference type="GO" id="GO:0051301">
    <property type="term" value="P:cell division"/>
    <property type="evidence" value="ECO:0007669"/>
    <property type="project" value="UniProtKB-KW"/>
</dbReference>
<dbReference type="GO" id="GO:0071555">
    <property type="term" value="P:cell wall organization"/>
    <property type="evidence" value="ECO:0007669"/>
    <property type="project" value="UniProtKB-KW"/>
</dbReference>
<dbReference type="GO" id="GO:0009252">
    <property type="term" value="P:peptidoglycan biosynthetic process"/>
    <property type="evidence" value="ECO:0007669"/>
    <property type="project" value="UniProtKB-UniRule"/>
</dbReference>
<dbReference type="GO" id="GO:0008360">
    <property type="term" value="P:regulation of cell shape"/>
    <property type="evidence" value="ECO:0007669"/>
    <property type="project" value="UniProtKB-KW"/>
</dbReference>
<dbReference type="Gene3D" id="3.90.190.20">
    <property type="entry name" value="Mur ligase, C-terminal domain"/>
    <property type="match status" value="1"/>
</dbReference>
<dbReference type="Gene3D" id="3.40.1190.10">
    <property type="entry name" value="Mur-like, catalytic domain"/>
    <property type="match status" value="1"/>
</dbReference>
<dbReference type="Gene3D" id="3.40.50.720">
    <property type="entry name" value="NAD(P)-binding Rossmann-like Domain"/>
    <property type="match status" value="1"/>
</dbReference>
<dbReference type="HAMAP" id="MF_00046">
    <property type="entry name" value="MurC"/>
    <property type="match status" value="1"/>
</dbReference>
<dbReference type="InterPro" id="IPR036565">
    <property type="entry name" value="Mur-like_cat_sf"/>
</dbReference>
<dbReference type="InterPro" id="IPR004101">
    <property type="entry name" value="Mur_ligase_C"/>
</dbReference>
<dbReference type="InterPro" id="IPR036615">
    <property type="entry name" value="Mur_ligase_C_dom_sf"/>
</dbReference>
<dbReference type="InterPro" id="IPR013221">
    <property type="entry name" value="Mur_ligase_cen"/>
</dbReference>
<dbReference type="InterPro" id="IPR000713">
    <property type="entry name" value="Mur_ligase_N"/>
</dbReference>
<dbReference type="InterPro" id="IPR050061">
    <property type="entry name" value="MurCDEF_pg_biosynth"/>
</dbReference>
<dbReference type="InterPro" id="IPR005758">
    <property type="entry name" value="UDP-N-AcMur_Ala_ligase_MurC"/>
</dbReference>
<dbReference type="NCBIfam" id="TIGR01082">
    <property type="entry name" value="murC"/>
    <property type="match status" value="1"/>
</dbReference>
<dbReference type="PANTHER" id="PTHR43445:SF3">
    <property type="entry name" value="UDP-N-ACETYLMURAMATE--L-ALANINE LIGASE"/>
    <property type="match status" value="1"/>
</dbReference>
<dbReference type="PANTHER" id="PTHR43445">
    <property type="entry name" value="UDP-N-ACETYLMURAMATE--L-ALANINE LIGASE-RELATED"/>
    <property type="match status" value="1"/>
</dbReference>
<dbReference type="Pfam" id="PF01225">
    <property type="entry name" value="Mur_ligase"/>
    <property type="match status" value="1"/>
</dbReference>
<dbReference type="Pfam" id="PF02875">
    <property type="entry name" value="Mur_ligase_C"/>
    <property type="match status" value="1"/>
</dbReference>
<dbReference type="Pfam" id="PF08245">
    <property type="entry name" value="Mur_ligase_M"/>
    <property type="match status" value="1"/>
</dbReference>
<dbReference type="SUPFAM" id="SSF51984">
    <property type="entry name" value="MurCD N-terminal domain"/>
    <property type="match status" value="1"/>
</dbReference>
<dbReference type="SUPFAM" id="SSF53623">
    <property type="entry name" value="MurD-like peptide ligases, catalytic domain"/>
    <property type="match status" value="1"/>
</dbReference>
<dbReference type="SUPFAM" id="SSF53244">
    <property type="entry name" value="MurD-like peptide ligases, peptide-binding domain"/>
    <property type="match status" value="1"/>
</dbReference>